<dbReference type="EC" id="2.4.1.69" evidence="2"/>
<dbReference type="EC" id="2.4.1.344" evidence="3"/>
<dbReference type="EMBL" id="AY219632">
    <property type="protein sequence ID" value="AAO43074.1"/>
    <property type="molecule type" value="Genomic_DNA"/>
</dbReference>
<dbReference type="SMR" id="Q866D6"/>
<dbReference type="CAZy" id="GT11">
    <property type="family name" value="Glycosyltransferase Family 11"/>
</dbReference>
<dbReference type="GlyCosmos" id="Q866D6">
    <property type="glycosylation" value="3 sites, No reported glycans"/>
</dbReference>
<dbReference type="UniPathway" id="UPA00378"/>
<dbReference type="GO" id="GO:0032580">
    <property type="term" value="C:Golgi cisterna membrane"/>
    <property type="evidence" value="ECO:0007669"/>
    <property type="project" value="UniProtKB-SubCell"/>
</dbReference>
<dbReference type="GO" id="GO:0031127">
    <property type="term" value="F:alpha-(1,2)-fucosyltransferase activity"/>
    <property type="evidence" value="ECO:0000250"/>
    <property type="project" value="UniProtKB"/>
</dbReference>
<dbReference type="GO" id="GO:0008107">
    <property type="term" value="F:galactoside 2-alpha-L-fucosyltransferase activity"/>
    <property type="evidence" value="ECO:0007669"/>
    <property type="project" value="UniProtKB-EC"/>
</dbReference>
<dbReference type="GO" id="GO:0005975">
    <property type="term" value="P:carbohydrate metabolic process"/>
    <property type="evidence" value="ECO:0007669"/>
    <property type="project" value="InterPro"/>
</dbReference>
<dbReference type="GO" id="GO:0036065">
    <property type="term" value="P:fucosylation"/>
    <property type="evidence" value="ECO:0000250"/>
    <property type="project" value="UniProtKB"/>
</dbReference>
<dbReference type="GO" id="GO:0006629">
    <property type="term" value="P:lipid metabolic process"/>
    <property type="evidence" value="ECO:0007669"/>
    <property type="project" value="UniProtKB-KW"/>
</dbReference>
<dbReference type="GO" id="GO:0021772">
    <property type="term" value="P:olfactory bulb development"/>
    <property type="evidence" value="ECO:0000250"/>
    <property type="project" value="UniProtKB"/>
</dbReference>
<dbReference type="GO" id="GO:0001954">
    <property type="term" value="P:positive regulation of cell-matrix adhesion"/>
    <property type="evidence" value="ECO:0000250"/>
    <property type="project" value="UniProtKB"/>
</dbReference>
<dbReference type="GO" id="GO:0010595">
    <property type="term" value="P:positive regulation of endothelial cell migration"/>
    <property type="evidence" value="ECO:0000250"/>
    <property type="project" value="UniProtKB"/>
</dbReference>
<dbReference type="GO" id="GO:1904906">
    <property type="term" value="P:positive regulation of endothelial cell-matrix adhesion via fibronectin"/>
    <property type="evidence" value="ECO:0000250"/>
    <property type="project" value="UniProtKB"/>
</dbReference>
<dbReference type="GO" id="GO:1903672">
    <property type="term" value="P:positive regulation of sprouting angiogenesis"/>
    <property type="evidence" value="ECO:0000250"/>
    <property type="project" value="UniProtKB"/>
</dbReference>
<dbReference type="GO" id="GO:0006486">
    <property type="term" value="P:protein glycosylation"/>
    <property type="evidence" value="ECO:0000250"/>
    <property type="project" value="UniProtKB"/>
</dbReference>
<dbReference type="GO" id="GO:0030155">
    <property type="term" value="P:regulation of cell adhesion"/>
    <property type="evidence" value="ECO:0000250"/>
    <property type="project" value="UniProtKB"/>
</dbReference>
<dbReference type="GO" id="GO:0001936">
    <property type="term" value="P:regulation of endothelial cell proliferation"/>
    <property type="evidence" value="ECO:0000250"/>
    <property type="project" value="UniProtKB"/>
</dbReference>
<dbReference type="CDD" id="cd11301">
    <property type="entry name" value="Fut1_Fut2_like"/>
    <property type="match status" value="1"/>
</dbReference>
<dbReference type="InterPro" id="IPR002516">
    <property type="entry name" value="Glyco_trans_11"/>
</dbReference>
<dbReference type="PANTHER" id="PTHR11927">
    <property type="entry name" value="GALACTOSIDE 2-L-FUCOSYLTRANSFERASE"/>
    <property type="match status" value="1"/>
</dbReference>
<dbReference type="PANTHER" id="PTHR11927:SF4">
    <property type="entry name" value="GALACTOSIDE ALPHA-(1,2)-FUCOSYLTRANSFERASE 1"/>
    <property type="match status" value="1"/>
</dbReference>
<dbReference type="Pfam" id="PF01531">
    <property type="entry name" value="Glyco_transf_11"/>
    <property type="match status" value="1"/>
</dbReference>
<feature type="chain" id="PRO_0000149097" description="Galactoside alpha-(1,2)-fucosyltransferase 1">
    <location>
        <begin position="1"/>
        <end position="365"/>
    </location>
</feature>
<feature type="topological domain" description="Cytoplasmic" evidence="4">
    <location>
        <begin position="1"/>
        <end position="8"/>
    </location>
</feature>
<feature type="transmembrane region" description="Helical; Signal-anchor for type II membrane protein" evidence="4">
    <location>
        <begin position="9"/>
        <end position="25"/>
    </location>
</feature>
<feature type="topological domain" description="Lumenal" evidence="4">
    <location>
        <begin position="26"/>
        <end position="365"/>
    </location>
</feature>
<feature type="glycosylation site" description="N-linked (GlcNAc...) asparagine" evidence="4">
    <location>
        <position position="65"/>
    </location>
</feature>
<feature type="glycosylation site" description="N-linked (GlcNAc...) asparagine" evidence="4">
    <location>
        <position position="301"/>
    </location>
</feature>
<feature type="glycosylation site" description="N-linked (GlcNAc...) asparagine" evidence="4">
    <location>
        <position position="327"/>
    </location>
</feature>
<organism>
    <name type="scientific">Leontopithecus chrysomelas</name>
    <name type="common">Golden-headed lion tamarin</name>
    <dbReference type="NCBI Taxonomy" id="57374"/>
    <lineage>
        <taxon>Eukaryota</taxon>
        <taxon>Metazoa</taxon>
        <taxon>Chordata</taxon>
        <taxon>Craniata</taxon>
        <taxon>Vertebrata</taxon>
        <taxon>Euteleostomi</taxon>
        <taxon>Mammalia</taxon>
        <taxon>Eutheria</taxon>
        <taxon>Euarchontoglires</taxon>
        <taxon>Primates</taxon>
        <taxon>Haplorrhini</taxon>
        <taxon>Platyrrhini</taxon>
        <taxon>Cebidae</taxon>
        <taxon>Callitrichinae</taxon>
        <taxon>Leontopithecus</taxon>
    </lineage>
</organism>
<proteinExistence type="inferred from homology"/>
<accession>Q866D6</accession>
<comment type="function">
    <text evidence="2 3">Catalyzes the transfer of L-fucose, from a guanosine diphosphate-beta-L-fucose, to the terminal galactose residue of glycoconjugates through an alpha(1,2) linkage leading to H antigen synthesis that is an intermediate substrate in the synthesis of ABO blood group antigens. H antigen is essential for maturation of the glomerular layer of the main olfactory bulb, in cell migration and early cell-cell contacts during tumor associated angiogenesis (By similarity). Preferentially fucosylates soluble lactose and to a lesser extent fucosylates glycolipids gangliosides GA1 and GM1a (By similarity).</text>
</comment>
<comment type="catalytic activity">
    <reaction evidence="3">
        <text>a beta-D-galactosyl-(1-&gt;4)-N-acetyl-beta-D-glucosaminyl derivative + GDP-beta-L-fucose = an alpha-L-Fuc-(1-&gt;2)-beta-D-Gal-(1-&gt;4)-beta-D-GlcNAc derivative + GDP + H(+)</text>
        <dbReference type="Rhea" id="RHEA:50668"/>
        <dbReference type="ChEBI" id="CHEBI:15378"/>
        <dbReference type="ChEBI" id="CHEBI:57273"/>
        <dbReference type="ChEBI" id="CHEBI:58189"/>
        <dbReference type="ChEBI" id="CHEBI:133507"/>
        <dbReference type="ChEBI" id="CHEBI:133510"/>
        <dbReference type="EC" id="2.4.1.344"/>
    </reaction>
</comment>
<comment type="catalytic activity">
    <reaction evidence="2">
        <text>a ganglioside GA1 + GDP-beta-L-fucose = a ganglioside Fuc-GA1 + GDP + H(+)</text>
        <dbReference type="Rhea" id="RHEA:48320"/>
        <dbReference type="ChEBI" id="CHEBI:15378"/>
        <dbReference type="ChEBI" id="CHEBI:57273"/>
        <dbReference type="ChEBI" id="CHEBI:58189"/>
        <dbReference type="ChEBI" id="CHEBI:88069"/>
        <dbReference type="ChEBI" id="CHEBI:90262"/>
    </reaction>
    <physiologicalReaction direction="left-to-right" evidence="2">
        <dbReference type="Rhea" id="RHEA:48321"/>
    </physiologicalReaction>
</comment>
<comment type="catalytic activity">
    <reaction evidence="2">
        <text>a beta-D-Gal-(1-&gt;3)-beta-D-GlcNAc-(1-&gt;3)-beta-D-Gal-(1-&gt;4)-beta-D-Glc-(1&lt;-&gt;1')-Cer(d18:1(4E)) + GDP-beta-L-fucose = alpha-L-fucosyl-(1-&gt;2)- beta-D-galactosyl-(1-&gt;3)-N-acetyl-beta-D-glucosaminyl-(1-&gt;3)-beta-D-galactosyl-(1-&gt;4)-beta-D-glucosyl-(1&lt;-&gt;1')-N-acylsphing-4-enine + GDP + H(+)</text>
        <dbReference type="Rhea" id="RHEA:32175"/>
        <dbReference type="ChEBI" id="CHEBI:15378"/>
        <dbReference type="ChEBI" id="CHEBI:17292"/>
        <dbReference type="ChEBI" id="CHEBI:28743"/>
        <dbReference type="ChEBI" id="CHEBI:57273"/>
        <dbReference type="ChEBI" id="CHEBI:58189"/>
        <dbReference type="EC" id="2.4.1.69"/>
    </reaction>
    <physiologicalReaction direction="left-to-right" evidence="2">
        <dbReference type="Rhea" id="RHEA:32176"/>
    </physiologicalReaction>
</comment>
<comment type="catalytic activity">
    <reaction evidence="2">
        <text>a neolactoside nLc4Cer(d18:1(4E)) + GDP-beta-L-fucose = a neolactoside IV(2)-alpha-Fuc-nLc4Cer(d18:1(4E)) + GDP + H(+)</text>
        <dbReference type="Rhea" id="RHEA:48304"/>
        <dbReference type="ChEBI" id="CHEBI:15378"/>
        <dbReference type="ChEBI" id="CHEBI:17006"/>
        <dbReference type="ChEBI" id="CHEBI:28691"/>
        <dbReference type="ChEBI" id="CHEBI:57273"/>
        <dbReference type="ChEBI" id="CHEBI:58189"/>
    </reaction>
    <physiologicalReaction direction="left-to-right" evidence="2">
        <dbReference type="Rhea" id="RHEA:48305"/>
    </physiologicalReaction>
</comment>
<comment type="catalytic activity">
    <reaction evidence="1">
        <text>a ganglioside GM1 + GDP-beta-L-fucose = a ganglioside Fuc-GM1 + GDP + H(+)</text>
        <dbReference type="Rhea" id="RHEA:48292"/>
        <dbReference type="ChEBI" id="CHEBI:15378"/>
        <dbReference type="ChEBI" id="CHEBI:57273"/>
        <dbReference type="ChEBI" id="CHEBI:58189"/>
        <dbReference type="ChEBI" id="CHEBI:82639"/>
        <dbReference type="ChEBI" id="CHEBI:90189"/>
    </reaction>
    <physiologicalReaction direction="left-to-right" evidence="1">
        <dbReference type="Rhea" id="RHEA:48293"/>
    </physiologicalReaction>
</comment>
<comment type="catalytic activity">
    <reaction evidence="1">
        <text>beta-D-galactosyl-(1-&gt;3)-N-acetyl-D-galactosamine + GDP-beta-L-fucose = alpha-L-fucosyl-(1-&gt;2)-beta-D-galactosyl-(1-&gt;3)-N-acetyl-D-galactosamine + GDP + H(+)</text>
        <dbReference type="Rhea" id="RHEA:62964"/>
        <dbReference type="ChEBI" id="CHEBI:15378"/>
        <dbReference type="ChEBI" id="CHEBI:57273"/>
        <dbReference type="ChEBI" id="CHEBI:58189"/>
        <dbReference type="ChEBI" id="CHEBI:84728"/>
        <dbReference type="ChEBI" id="CHEBI:546807"/>
    </reaction>
    <physiologicalReaction direction="left-to-right" evidence="1">
        <dbReference type="Rhea" id="RHEA:62965"/>
    </physiologicalReaction>
</comment>
<comment type="pathway">
    <text evidence="3">Protein modification; protein glycosylation.</text>
</comment>
<comment type="subcellular location">
    <subcellularLocation>
        <location evidence="2">Golgi apparatus</location>
        <location evidence="2">Golgi stack membrane</location>
        <topology evidence="2">Single-pass type II membrane protein</topology>
    </subcellularLocation>
    <text evidence="2">Membrane-bound form in trans cisternae of Golgi.</text>
</comment>
<comment type="similarity">
    <text evidence="5">Belongs to the glycosyltransferase 11 family.</text>
</comment>
<reference key="1">
    <citation type="submission" date="2003-01" db="EMBL/GenBank/DDBJ databases">
        <title>Molecular evolution of the H (FUT1) gene in New World monkeys (Primates, Platyrrhini): evidence of divergent evolution and purifying selection.</title>
        <authorList>
            <person name="Borges B.N."/>
            <person name="Harada M.L."/>
        </authorList>
    </citation>
    <scope>NUCLEOTIDE SEQUENCE [GENOMIC DNA]</scope>
</reference>
<name>FUT1_LEOCY</name>
<sequence>MWPLSHRHLCLAFLLVCVLSAISFFLHLYQDSIRHGLGLSILCPDRLVTAPVAIFCLPDTPVSPNTSSPCPQHPASLSGTWTIYPDGRFGNQMGQYATLLALAQLNGRRAFILPAMHATLAPVFRITLPVLAPEVDSSTPWRELQLHDWMSEEYADLGDPFLKLSGFPCSWTFFHHLREQILSEFTLHDHLREEAQSVLRRLRLGRSGDRPRTFVGVHVRRGDYLQVMPQRWKGVVGNSAYLREAMDWFRARHEAPVFVVTSNGMEWCRENIDASKGDVMFAGDGREALPWKDFALLTQCNHTIMTIGTFGFWAAYLAGGDTVYLANFTLPDSEFLKIFKPEAAFLPEWVGINADLSPLWTLAEP</sequence>
<protein>
    <recommendedName>
        <fullName evidence="3">Galactoside alpha-(1,2)-fucosyltransferase 1</fullName>
    </recommendedName>
    <alternativeName>
        <fullName>Alpha(1,2)FT 1</fullName>
    </alternativeName>
    <alternativeName>
        <fullName>Fucosyltransferase 1</fullName>
    </alternativeName>
    <alternativeName>
        <fullName>GDP-L-fucose:beta-D-galactoside 2-alpha-L-fucosyltransferase 1</fullName>
    </alternativeName>
    <alternativeName>
        <fullName evidence="2">Type 1 galactoside alpha-(1,2)-fucosyltransferase FUT1</fullName>
        <ecNumber evidence="2">2.4.1.69</ecNumber>
    </alternativeName>
    <alternativeName>
        <fullName evidence="3">Type 2 galactoside alpha-(1,2)-fucosyltransferase FUT1</fullName>
        <ecNumber evidence="3">2.4.1.344</ecNumber>
    </alternativeName>
</protein>
<gene>
    <name evidence="3" type="primary">FUT1</name>
</gene>
<keyword id="KW-0325">Glycoprotein</keyword>
<keyword id="KW-0328">Glycosyltransferase</keyword>
<keyword id="KW-0333">Golgi apparatus</keyword>
<keyword id="KW-0443">Lipid metabolism</keyword>
<keyword id="KW-0472">Membrane</keyword>
<keyword id="KW-0735">Signal-anchor</keyword>
<keyword id="KW-0808">Transferase</keyword>
<keyword id="KW-0812">Transmembrane</keyword>
<keyword id="KW-1133">Transmembrane helix</keyword>
<evidence type="ECO:0000250" key="1">
    <source>
        <dbReference type="UniProtKB" id="F6Q1T7"/>
    </source>
</evidence>
<evidence type="ECO:0000250" key="2">
    <source>
        <dbReference type="UniProtKB" id="O09160"/>
    </source>
</evidence>
<evidence type="ECO:0000250" key="3">
    <source>
        <dbReference type="UniProtKB" id="P19526"/>
    </source>
</evidence>
<evidence type="ECO:0000255" key="4"/>
<evidence type="ECO:0000305" key="5"/>